<reference key="1">
    <citation type="submission" date="2006-10" db="EMBL/GenBank/DDBJ databases">
        <title>Complete sequence of Syntrophobacter fumaroxidans MPOB.</title>
        <authorList>
            <consortium name="US DOE Joint Genome Institute"/>
            <person name="Copeland A."/>
            <person name="Lucas S."/>
            <person name="Lapidus A."/>
            <person name="Barry K."/>
            <person name="Detter J.C."/>
            <person name="Glavina del Rio T."/>
            <person name="Hammon N."/>
            <person name="Israni S."/>
            <person name="Pitluck S."/>
            <person name="Goltsman E.G."/>
            <person name="Martinez M."/>
            <person name="Schmutz J."/>
            <person name="Larimer F."/>
            <person name="Land M."/>
            <person name="Hauser L."/>
            <person name="Kyrpides N."/>
            <person name="Kim E."/>
            <person name="Boone D.R."/>
            <person name="Brockman F."/>
            <person name="Culley D."/>
            <person name="Ferry J."/>
            <person name="Gunsalus R."/>
            <person name="McInerney M.J."/>
            <person name="Morrison M."/>
            <person name="Plugge C."/>
            <person name="Rohlin L."/>
            <person name="Scholten J."/>
            <person name="Sieber J."/>
            <person name="Stams A.J.M."/>
            <person name="Worm P."/>
            <person name="Henstra A.M."/>
            <person name="Richardson P."/>
        </authorList>
    </citation>
    <scope>NUCLEOTIDE SEQUENCE [LARGE SCALE GENOMIC DNA]</scope>
    <source>
        <strain>DSM 10017 / MPOB</strain>
    </source>
</reference>
<gene>
    <name evidence="1" type="primary">metK</name>
    <name type="ordered locus">Sfum_0367</name>
</gene>
<proteinExistence type="inferred from homology"/>
<evidence type="ECO:0000255" key="1">
    <source>
        <dbReference type="HAMAP-Rule" id="MF_00086"/>
    </source>
</evidence>
<comment type="function">
    <text evidence="1">Catalyzes the formation of S-adenosylmethionine (AdoMet) from methionine and ATP. The overall synthetic reaction is composed of two sequential steps, AdoMet formation and the subsequent tripolyphosphate hydrolysis which occurs prior to release of AdoMet from the enzyme.</text>
</comment>
<comment type="catalytic activity">
    <reaction evidence="1">
        <text>L-methionine + ATP + H2O = S-adenosyl-L-methionine + phosphate + diphosphate</text>
        <dbReference type="Rhea" id="RHEA:21080"/>
        <dbReference type="ChEBI" id="CHEBI:15377"/>
        <dbReference type="ChEBI" id="CHEBI:30616"/>
        <dbReference type="ChEBI" id="CHEBI:33019"/>
        <dbReference type="ChEBI" id="CHEBI:43474"/>
        <dbReference type="ChEBI" id="CHEBI:57844"/>
        <dbReference type="ChEBI" id="CHEBI:59789"/>
        <dbReference type="EC" id="2.5.1.6"/>
    </reaction>
</comment>
<comment type="cofactor">
    <cofactor evidence="1">
        <name>Mg(2+)</name>
        <dbReference type="ChEBI" id="CHEBI:18420"/>
    </cofactor>
    <text evidence="1">Binds 2 divalent ions per subunit.</text>
</comment>
<comment type="cofactor">
    <cofactor evidence="1">
        <name>K(+)</name>
        <dbReference type="ChEBI" id="CHEBI:29103"/>
    </cofactor>
    <text evidence="1">Binds 1 potassium ion per subunit.</text>
</comment>
<comment type="pathway">
    <text evidence="1">Amino-acid biosynthesis; S-adenosyl-L-methionine biosynthesis; S-adenosyl-L-methionine from L-methionine: step 1/1.</text>
</comment>
<comment type="subunit">
    <text evidence="1">Homotetramer; dimer of dimers.</text>
</comment>
<comment type="subcellular location">
    <subcellularLocation>
        <location evidence="1">Cytoplasm</location>
    </subcellularLocation>
</comment>
<comment type="similarity">
    <text evidence="1">Belongs to the AdoMet synthase family.</text>
</comment>
<sequence length="389" mass="42594">MSMSNFLFTSESVTEGHPDKVADQISDSILDAIITEDKTARVACETLVTTGLAFVAGEITTSSWVDIPDIIRSTIKGIGYNDSSMGFDWSTCAVITSIDKQSPDIAQGVNPGEGLFEEQGAGDQGLMFGFACNETPVFMPMPIYYAHRITRKLAEVRKNGVLEFLRPDGKSQVTVEYDDHRPKRIDTIVVAAQHAPNVSYSMIRESIIEEVIKKVFPPELIDDKTKYFINSTGRFVIGGPMGDCGLTGRKIIADTYGGQGSHGGGCFSGKDPSKVDRTASYMARYVAKNIVAAGVADKVEVQVAYSIGVAEPVSLMIDTFGTGKIPSDRIAEIVRKLFSFKPANMIKQLRLLRPIFKKTACYGHFGRNDPDFTWEKTDMVEPIRELAGI</sequence>
<organism>
    <name type="scientific">Syntrophobacter fumaroxidans (strain DSM 10017 / MPOB)</name>
    <dbReference type="NCBI Taxonomy" id="335543"/>
    <lineage>
        <taxon>Bacteria</taxon>
        <taxon>Pseudomonadati</taxon>
        <taxon>Thermodesulfobacteriota</taxon>
        <taxon>Syntrophobacteria</taxon>
        <taxon>Syntrophobacterales</taxon>
        <taxon>Syntrophobacteraceae</taxon>
        <taxon>Syntrophobacter</taxon>
    </lineage>
</organism>
<keyword id="KW-0067">ATP-binding</keyword>
<keyword id="KW-0963">Cytoplasm</keyword>
<keyword id="KW-0460">Magnesium</keyword>
<keyword id="KW-0479">Metal-binding</keyword>
<keyword id="KW-0547">Nucleotide-binding</keyword>
<keyword id="KW-0554">One-carbon metabolism</keyword>
<keyword id="KW-0630">Potassium</keyword>
<keyword id="KW-1185">Reference proteome</keyword>
<keyword id="KW-0808">Transferase</keyword>
<accession>A0LF65</accession>
<dbReference type="EC" id="2.5.1.6" evidence="1"/>
<dbReference type="EMBL" id="CP000478">
    <property type="protein sequence ID" value="ABK16067.1"/>
    <property type="molecule type" value="Genomic_DNA"/>
</dbReference>
<dbReference type="RefSeq" id="WP_011697240.1">
    <property type="nucleotide sequence ID" value="NC_008554.1"/>
</dbReference>
<dbReference type="SMR" id="A0LF65"/>
<dbReference type="FunCoup" id="A0LF65">
    <property type="interactions" value="552"/>
</dbReference>
<dbReference type="STRING" id="335543.Sfum_0367"/>
<dbReference type="KEGG" id="sfu:Sfum_0367"/>
<dbReference type="eggNOG" id="COG0192">
    <property type="taxonomic scope" value="Bacteria"/>
</dbReference>
<dbReference type="HOGENOM" id="CLU_041802_1_1_7"/>
<dbReference type="InParanoid" id="A0LF65"/>
<dbReference type="OrthoDB" id="9801686at2"/>
<dbReference type="UniPathway" id="UPA00315">
    <property type="reaction ID" value="UER00080"/>
</dbReference>
<dbReference type="Proteomes" id="UP000001784">
    <property type="component" value="Chromosome"/>
</dbReference>
<dbReference type="GO" id="GO:0005737">
    <property type="term" value="C:cytoplasm"/>
    <property type="evidence" value="ECO:0007669"/>
    <property type="project" value="UniProtKB-SubCell"/>
</dbReference>
<dbReference type="GO" id="GO:0005524">
    <property type="term" value="F:ATP binding"/>
    <property type="evidence" value="ECO:0007669"/>
    <property type="project" value="UniProtKB-UniRule"/>
</dbReference>
<dbReference type="GO" id="GO:0000287">
    <property type="term" value="F:magnesium ion binding"/>
    <property type="evidence" value="ECO:0007669"/>
    <property type="project" value="UniProtKB-UniRule"/>
</dbReference>
<dbReference type="GO" id="GO:0004478">
    <property type="term" value="F:methionine adenosyltransferase activity"/>
    <property type="evidence" value="ECO:0007669"/>
    <property type="project" value="UniProtKB-UniRule"/>
</dbReference>
<dbReference type="GO" id="GO:0006730">
    <property type="term" value="P:one-carbon metabolic process"/>
    <property type="evidence" value="ECO:0007669"/>
    <property type="project" value="UniProtKB-KW"/>
</dbReference>
<dbReference type="GO" id="GO:0006556">
    <property type="term" value="P:S-adenosylmethionine biosynthetic process"/>
    <property type="evidence" value="ECO:0007669"/>
    <property type="project" value="UniProtKB-UniRule"/>
</dbReference>
<dbReference type="CDD" id="cd18079">
    <property type="entry name" value="S-AdoMet_synt"/>
    <property type="match status" value="1"/>
</dbReference>
<dbReference type="FunFam" id="3.30.300.10:FF:000003">
    <property type="entry name" value="S-adenosylmethionine synthase"/>
    <property type="match status" value="1"/>
</dbReference>
<dbReference type="Gene3D" id="3.30.300.10">
    <property type="match status" value="3"/>
</dbReference>
<dbReference type="HAMAP" id="MF_00086">
    <property type="entry name" value="S_AdoMet_synth1"/>
    <property type="match status" value="1"/>
</dbReference>
<dbReference type="InterPro" id="IPR022631">
    <property type="entry name" value="ADOMET_SYNTHASE_CS"/>
</dbReference>
<dbReference type="InterPro" id="IPR022630">
    <property type="entry name" value="S-AdoMet_synt_C"/>
</dbReference>
<dbReference type="InterPro" id="IPR022629">
    <property type="entry name" value="S-AdoMet_synt_central"/>
</dbReference>
<dbReference type="InterPro" id="IPR022628">
    <property type="entry name" value="S-AdoMet_synt_N"/>
</dbReference>
<dbReference type="InterPro" id="IPR002133">
    <property type="entry name" value="S-AdoMet_synthetase"/>
</dbReference>
<dbReference type="InterPro" id="IPR022636">
    <property type="entry name" value="S-AdoMet_synthetase_sfam"/>
</dbReference>
<dbReference type="NCBIfam" id="TIGR01034">
    <property type="entry name" value="metK"/>
    <property type="match status" value="1"/>
</dbReference>
<dbReference type="PANTHER" id="PTHR11964">
    <property type="entry name" value="S-ADENOSYLMETHIONINE SYNTHETASE"/>
    <property type="match status" value="1"/>
</dbReference>
<dbReference type="Pfam" id="PF02773">
    <property type="entry name" value="S-AdoMet_synt_C"/>
    <property type="match status" value="1"/>
</dbReference>
<dbReference type="Pfam" id="PF02772">
    <property type="entry name" value="S-AdoMet_synt_M"/>
    <property type="match status" value="1"/>
</dbReference>
<dbReference type="Pfam" id="PF00438">
    <property type="entry name" value="S-AdoMet_synt_N"/>
    <property type="match status" value="1"/>
</dbReference>
<dbReference type="PIRSF" id="PIRSF000497">
    <property type="entry name" value="MAT"/>
    <property type="match status" value="1"/>
</dbReference>
<dbReference type="SUPFAM" id="SSF55973">
    <property type="entry name" value="S-adenosylmethionine synthetase"/>
    <property type="match status" value="3"/>
</dbReference>
<dbReference type="PROSITE" id="PS00376">
    <property type="entry name" value="ADOMET_SYNTHASE_1"/>
    <property type="match status" value="1"/>
</dbReference>
<dbReference type="PROSITE" id="PS00377">
    <property type="entry name" value="ADOMET_SYNTHASE_2"/>
    <property type="match status" value="1"/>
</dbReference>
<name>METK_SYNFM</name>
<protein>
    <recommendedName>
        <fullName evidence="1">S-adenosylmethionine synthase</fullName>
        <shortName evidence="1">AdoMet synthase</shortName>
        <ecNumber evidence="1">2.5.1.6</ecNumber>
    </recommendedName>
    <alternativeName>
        <fullName evidence="1">MAT</fullName>
    </alternativeName>
    <alternativeName>
        <fullName evidence="1">Methionine adenosyltransferase</fullName>
    </alternativeName>
</protein>
<feature type="chain" id="PRO_0000302997" description="S-adenosylmethionine synthase">
    <location>
        <begin position="1"/>
        <end position="389"/>
    </location>
</feature>
<feature type="region of interest" description="Flexible loop" evidence="1">
    <location>
        <begin position="101"/>
        <end position="111"/>
    </location>
</feature>
<feature type="binding site" description="in other chain" evidence="1">
    <location>
        <position position="17"/>
    </location>
    <ligand>
        <name>ATP</name>
        <dbReference type="ChEBI" id="CHEBI:30616"/>
        <note>ligand shared between two neighboring subunits</note>
    </ligand>
</feature>
<feature type="binding site" evidence="1">
    <location>
        <position position="19"/>
    </location>
    <ligand>
        <name>Mg(2+)</name>
        <dbReference type="ChEBI" id="CHEBI:18420"/>
    </ligand>
</feature>
<feature type="binding site" evidence="1">
    <location>
        <position position="45"/>
    </location>
    <ligand>
        <name>K(+)</name>
        <dbReference type="ChEBI" id="CHEBI:29103"/>
    </ligand>
</feature>
<feature type="binding site" description="in other chain" evidence="1">
    <location>
        <position position="58"/>
    </location>
    <ligand>
        <name>L-methionine</name>
        <dbReference type="ChEBI" id="CHEBI:57844"/>
        <note>ligand shared between two neighboring subunits</note>
    </ligand>
</feature>
<feature type="binding site" description="in other chain" evidence="1">
    <location>
        <position position="101"/>
    </location>
    <ligand>
        <name>L-methionine</name>
        <dbReference type="ChEBI" id="CHEBI:57844"/>
        <note>ligand shared between two neighboring subunits</note>
    </ligand>
</feature>
<feature type="binding site" description="in other chain" evidence="1">
    <location>
        <begin position="168"/>
        <end position="170"/>
    </location>
    <ligand>
        <name>ATP</name>
        <dbReference type="ChEBI" id="CHEBI:30616"/>
        <note>ligand shared between two neighboring subunits</note>
    </ligand>
</feature>
<feature type="binding site" description="in other chain" evidence="1">
    <location>
        <begin position="234"/>
        <end position="235"/>
    </location>
    <ligand>
        <name>ATP</name>
        <dbReference type="ChEBI" id="CHEBI:30616"/>
        <note>ligand shared between two neighboring subunits</note>
    </ligand>
</feature>
<feature type="binding site" evidence="1">
    <location>
        <position position="243"/>
    </location>
    <ligand>
        <name>ATP</name>
        <dbReference type="ChEBI" id="CHEBI:30616"/>
        <note>ligand shared between two neighboring subunits</note>
    </ligand>
</feature>
<feature type="binding site" evidence="1">
    <location>
        <position position="243"/>
    </location>
    <ligand>
        <name>L-methionine</name>
        <dbReference type="ChEBI" id="CHEBI:57844"/>
        <note>ligand shared between two neighboring subunits</note>
    </ligand>
</feature>
<feature type="binding site" description="in other chain" evidence="1">
    <location>
        <begin position="249"/>
        <end position="250"/>
    </location>
    <ligand>
        <name>ATP</name>
        <dbReference type="ChEBI" id="CHEBI:30616"/>
        <note>ligand shared between two neighboring subunits</note>
    </ligand>
</feature>
<feature type="binding site" evidence="1">
    <location>
        <position position="270"/>
    </location>
    <ligand>
        <name>ATP</name>
        <dbReference type="ChEBI" id="CHEBI:30616"/>
        <note>ligand shared between two neighboring subunits</note>
    </ligand>
</feature>
<feature type="binding site" description="in other chain" evidence="1">
    <location>
        <position position="274"/>
    </location>
    <ligand>
        <name>L-methionine</name>
        <dbReference type="ChEBI" id="CHEBI:57844"/>
        <note>ligand shared between two neighboring subunits</note>
    </ligand>
</feature>